<gene>
    <name evidence="1" type="primary">glyQ</name>
    <name type="ordered locus">SSPA3274</name>
</gene>
<accession>B5BHU2</accession>
<organism>
    <name type="scientific">Salmonella paratyphi A (strain AKU_12601)</name>
    <dbReference type="NCBI Taxonomy" id="554290"/>
    <lineage>
        <taxon>Bacteria</taxon>
        <taxon>Pseudomonadati</taxon>
        <taxon>Pseudomonadota</taxon>
        <taxon>Gammaproteobacteria</taxon>
        <taxon>Enterobacterales</taxon>
        <taxon>Enterobacteriaceae</taxon>
        <taxon>Salmonella</taxon>
    </lineage>
</organism>
<comment type="catalytic activity">
    <reaction evidence="1">
        <text>tRNA(Gly) + glycine + ATP = glycyl-tRNA(Gly) + AMP + diphosphate</text>
        <dbReference type="Rhea" id="RHEA:16013"/>
        <dbReference type="Rhea" id="RHEA-COMP:9664"/>
        <dbReference type="Rhea" id="RHEA-COMP:9683"/>
        <dbReference type="ChEBI" id="CHEBI:30616"/>
        <dbReference type="ChEBI" id="CHEBI:33019"/>
        <dbReference type="ChEBI" id="CHEBI:57305"/>
        <dbReference type="ChEBI" id="CHEBI:78442"/>
        <dbReference type="ChEBI" id="CHEBI:78522"/>
        <dbReference type="ChEBI" id="CHEBI:456215"/>
        <dbReference type="EC" id="6.1.1.14"/>
    </reaction>
</comment>
<comment type="subunit">
    <text evidence="1">Tetramer of two alpha and two beta subunits.</text>
</comment>
<comment type="subcellular location">
    <subcellularLocation>
        <location evidence="1">Cytoplasm</location>
    </subcellularLocation>
</comment>
<comment type="similarity">
    <text evidence="1">Belongs to the class-II aminoacyl-tRNA synthetase family.</text>
</comment>
<dbReference type="EC" id="6.1.1.14" evidence="1"/>
<dbReference type="EMBL" id="FM200053">
    <property type="protein sequence ID" value="CAR61537.1"/>
    <property type="molecule type" value="Genomic_DNA"/>
</dbReference>
<dbReference type="RefSeq" id="WP_001168556.1">
    <property type="nucleotide sequence ID" value="NC_011147.1"/>
</dbReference>
<dbReference type="SMR" id="B5BHU2"/>
<dbReference type="KEGG" id="sek:SSPA3274"/>
<dbReference type="HOGENOM" id="CLU_057066_1_0_6"/>
<dbReference type="Proteomes" id="UP000001869">
    <property type="component" value="Chromosome"/>
</dbReference>
<dbReference type="GO" id="GO:0005829">
    <property type="term" value="C:cytosol"/>
    <property type="evidence" value="ECO:0007669"/>
    <property type="project" value="TreeGrafter"/>
</dbReference>
<dbReference type="GO" id="GO:0005524">
    <property type="term" value="F:ATP binding"/>
    <property type="evidence" value="ECO:0007669"/>
    <property type="project" value="UniProtKB-UniRule"/>
</dbReference>
<dbReference type="GO" id="GO:0004820">
    <property type="term" value="F:glycine-tRNA ligase activity"/>
    <property type="evidence" value="ECO:0007669"/>
    <property type="project" value="UniProtKB-UniRule"/>
</dbReference>
<dbReference type="GO" id="GO:0006426">
    <property type="term" value="P:glycyl-tRNA aminoacylation"/>
    <property type="evidence" value="ECO:0007669"/>
    <property type="project" value="UniProtKB-UniRule"/>
</dbReference>
<dbReference type="CDD" id="cd00733">
    <property type="entry name" value="GlyRS_alpha_core"/>
    <property type="match status" value="1"/>
</dbReference>
<dbReference type="FunFam" id="1.20.58.180:FF:000001">
    <property type="entry name" value="Glycine--tRNA ligase alpha subunit"/>
    <property type="match status" value="1"/>
</dbReference>
<dbReference type="FunFam" id="3.30.930.10:FF:000006">
    <property type="entry name" value="Glycine--tRNA ligase alpha subunit"/>
    <property type="match status" value="1"/>
</dbReference>
<dbReference type="Gene3D" id="3.30.930.10">
    <property type="entry name" value="Bira Bifunctional Protein, Domain 2"/>
    <property type="match status" value="1"/>
</dbReference>
<dbReference type="Gene3D" id="1.20.58.180">
    <property type="entry name" value="Class II aaRS and biotin synthetases, domain 2"/>
    <property type="match status" value="1"/>
</dbReference>
<dbReference type="HAMAP" id="MF_00254">
    <property type="entry name" value="Gly_tRNA_synth_alpha"/>
    <property type="match status" value="1"/>
</dbReference>
<dbReference type="InterPro" id="IPR045864">
    <property type="entry name" value="aa-tRNA-synth_II/BPL/LPL"/>
</dbReference>
<dbReference type="InterPro" id="IPR006194">
    <property type="entry name" value="Gly-tRNA-synth_heterodimer"/>
</dbReference>
<dbReference type="InterPro" id="IPR002310">
    <property type="entry name" value="Gly-tRNA_ligase_asu"/>
</dbReference>
<dbReference type="NCBIfam" id="TIGR00388">
    <property type="entry name" value="glyQ"/>
    <property type="match status" value="1"/>
</dbReference>
<dbReference type="NCBIfam" id="NF006827">
    <property type="entry name" value="PRK09348.1"/>
    <property type="match status" value="1"/>
</dbReference>
<dbReference type="PANTHER" id="PTHR30075:SF2">
    <property type="entry name" value="GLYCINE--TRNA LIGASE, CHLOROPLASTIC_MITOCHONDRIAL 2"/>
    <property type="match status" value="1"/>
</dbReference>
<dbReference type="PANTHER" id="PTHR30075">
    <property type="entry name" value="GLYCYL-TRNA SYNTHETASE"/>
    <property type="match status" value="1"/>
</dbReference>
<dbReference type="Pfam" id="PF02091">
    <property type="entry name" value="tRNA-synt_2e"/>
    <property type="match status" value="1"/>
</dbReference>
<dbReference type="PRINTS" id="PR01044">
    <property type="entry name" value="TRNASYNTHGA"/>
</dbReference>
<dbReference type="SUPFAM" id="SSF55681">
    <property type="entry name" value="Class II aaRS and biotin synthetases"/>
    <property type="match status" value="1"/>
</dbReference>
<dbReference type="PROSITE" id="PS50861">
    <property type="entry name" value="AA_TRNA_LIGASE_II_GLYAB"/>
    <property type="match status" value="1"/>
</dbReference>
<protein>
    <recommendedName>
        <fullName evidence="1">Glycine--tRNA ligase alpha subunit</fullName>
        <ecNumber evidence="1">6.1.1.14</ecNumber>
    </recommendedName>
    <alternativeName>
        <fullName evidence="1">Glycyl-tRNA synthetase alpha subunit</fullName>
        <shortName evidence="1">GlyRS</shortName>
    </alternativeName>
</protein>
<reference key="1">
    <citation type="journal article" date="2009" name="BMC Genomics">
        <title>Pseudogene accumulation in the evolutionary histories of Salmonella enterica serovars Paratyphi A and Typhi.</title>
        <authorList>
            <person name="Holt K.E."/>
            <person name="Thomson N.R."/>
            <person name="Wain J."/>
            <person name="Langridge G.C."/>
            <person name="Hasan R."/>
            <person name="Bhutta Z.A."/>
            <person name="Quail M.A."/>
            <person name="Norbertczak H."/>
            <person name="Walker D."/>
            <person name="Simmonds M."/>
            <person name="White B."/>
            <person name="Bason N."/>
            <person name="Mungall K."/>
            <person name="Dougan G."/>
            <person name="Parkhill J."/>
        </authorList>
    </citation>
    <scope>NUCLEOTIDE SEQUENCE [LARGE SCALE GENOMIC DNA]</scope>
    <source>
        <strain>AKU_12601</strain>
    </source>
</reference>
<keyword id="KW-0030">Aminoacyl-tRNA synthetase</keyword>
<keyword id="KW-0067">ATP-binding</keyword>
<keyword id="KW-0963">Cytoplasm</keyword>
<keyword id="KW-0436">Ligase</keyword>
<keyword id="KW-0547">Nucleotide-binding</keyword>
<keyword id="KW-0648">Protein biosynthesis</keyword>
<name>SYGA_SALPK</name>
<proteinExistence type="inferred from homology"/>
<feature type="chain" id="PRO_1000101229" description="Glycine--tRNA ligase alpha subunit">
    <location>
        <begin position="1"/>
        <end position="303"/>
    </location>
</feature>
<evidence type="ECO:0000255" key="1">
    <source>
        <dbReference type="HAMAP-Rule" id="MF_00254"/>
    </source>
</evidence>
<sequence length="303" mass="34760">MQKFDTRTFQGLILTLQDYWARQGCTIVQPLDMEVGAGTSHPMTCLRALGPEPMATAYVQPSRRPTDGRYGENPNRLQHYYQFQVVIKPSPENIQELYLGSLKELGMDPTIHDIRFVEDNWENPTLGAWGLGWEVWLNGMEVTQFTYFQQVGGLECKPVTGEITYGLERLAMYIQGVDSVYDLVWSDGPLGKTTYGDVFHQNEVEQSTYNFEYADVDFLFTCFEQYEKEAQQLLALENPLPLPAYERILKAAHSFNLLDARKAISVTERQRYILRIRTLTKAVAEAYYASREALGFPMCNKDK</sequence>